<reference key="1">
    <citation type="submission" date="2006-12" db="EMBL/GenBank/DDBJ databases">
        <title>Complete sequence of Shewanella amazonensis SB2B.</title>
        <authorList>
            <consortium name="US DOE Joint Genome Institute"/>
            <person name="Copeland A."/>
            <person name="Lucas S."/>
            <person name="Lapidus A."/>
            <person name="Barry K."/>
            <person name="Detter J.C."/>
            <person name="Glavina del Rio T."/>
            <person name="Hammon N."/>
            <person name="Israni S."/>
            <person name="Dalin E."/>
            <person name="Tice H."/>
            <person name="Pitluck S."/>
            <person name="Munk A.C."/>
            <person name="Brettin T."/>
            <person name="Bruce D."/>
            <person name="Han C."/>
            <person name="Tapia R."/>
            <person name="Gilna P."/>
            <person name="Schmutz J."/>
            <person name="Larimer F."/>
            <person name="Land M."/>
            <person name="Hauser L."/>
            <person name="Kyrpides N."/>
            <person name="Mikhailova N."/>
            <person name="Fredrickson J."/>
            <person name="Richardson P."/>
        </authorList>
    </citation>
    <scope>NUCLEOTIDE SEQUENCE [LARGE SCALE GENOMIC DNA]</scope>
    <source>
        <strain>ATCC BAA-1098 / SB2B</strain>
    </source>
</reference>
<organism>
    <name type="scientific">Shewanella amazonensis (strain ATCC BAA-1098 / SB2B)</name>
    <dbReference type="NCBI Taxonomy" id="326297"/>
    <lineage>
        <taxon>Bacteria</taxon>
        <taxon>Pseudomonadati</taxon>
        <taxon>Pseudomonadota</taxon>
        <taxon>Gammaproteobacteria</taxon>
        <taxon>Alteromonadales</taxon>
        <taxon>Shewanellaceae</taxon>
        <taxon>Shewanella</taxon>
    </lineage>
</organism>
<keyword id="KW-1185">Reference proteome</keyword>
<proteinExistence type="inferred from homology"/>
<comment type="similarity">
    <text evidence="1">Belongs to the UPF0178 family.</text>
</comment>
<gene>
    <name type="ordered locus">Sama_3557</name>
</gene>
<protein>
    <recommendedName>
        <fullName evidence="1">UPF0178 protein Sama_3557</fullName>
    </recommendedName>
</protein>
<feature type="chain" id="PRO_1000014441" description="UPF0178 protein Sama_3557">
    <location>
        <begin position="1"/>
        <end position="149"/>
    </location>
</feature>
<evidence type="ECO:0000255" key="1">
    <source>
        <dbReference type="HAMAP-Rule" id="MF_00489"/>
    </source>
</evidence>
<name>Y3557_SHEAM</name>
<accession>A1SBK3</accession>
<sequence length="149" mass="16397">MQIWVDADACPSVIKEVLFRAAERRQITVTLVANQSVRVPPSPFIKSIRVESGFDVADNEIVKRVSKGELVITADIPLADEVIAKGALALNPRGELYTAENVKARLNMRDFMETLRASGIQSGGPAPLSQADRQAFANQLDRWLARLPK</sequence>
<dbReference type="EMBL" id="CP000507">
    <property type="protein sequence ID" value="ABM01760.1"/>
    <property type="molecule type" value="Genomic_DNA"/>
</dbReference>
<dbReference type="RefSeq" id="WP_011761663.1">
    <property type="nucleotide sequence ID" value="NC_008700.1"/>
</dbReference>
<dbReference type="STRING" id="326297.Sama_3557"/>
<dbReference type="KEGG" id="saz:Sama_3557"/>
<dbReference type="eggNOG" id="COG1671">
    <property type="taxonomic scope" value="Bacteria"/>
</dbReference>
<dbReference type="HOGENOM" id="CLU_106619_2_1_6"/>
<dbReference type="OrthoDB" id="9798918at2"/>
<dbReference type="Proteomes" id="UP000009175">
    <property type="component" value="Chromosome"/>
</dbReference>
<dbReference type="CDD" id="cd18720">
    <property type="entry name" value="PIN_YqxD-like"/>
    <property type="match status" value="1"/>
</dbReference>
<dbReference type="HAMAP" id="MF_00489">
    <property type="entry name" value="UPF0178"/>
    <property type="match status" value="1"/>
</dbReference>
<dbReference type="InterPro" id="IPR003791">
    <property type="entry name" value="UPF0178"/>
</dbReference>
<dbReference type="NCBIfam" id="NF001095">
    <property type="entry name" value="PRK00124.1"/>
    <property type="match status" value="1"/>
</dbReference>
<dbReference type="PANTHER" id="PTHR35146">
    <property type="entry name" value="UPF0178 PROTEIN YAII"/>
    <property type="match status" value="1"/>
</dbReference>
<dbReference type="PANTHER" id="PTHR35146:SF1">
    <property type="entry name" value="UPF0178 PROTEIN YAII"/>
    <property type="match status" value="1"/>
</dbReference>
<dbReference type="Pfam" id="PF02639">
    <property type="entry name" value="DUF188"/>
    <property type="match status" value="1"/>
</dbReference>